<evidence type="ECO:0000255" key="1">
    <source>
        <dbReference type="HAMAP-Rule" id="MF_01334"/>
    </source>
</evidence>
<evidence type="ECO:0000305" key="2"/>
<gene>
    <name evidence="1" type="primary">rplY</name>
    <name evidence="1" type="synonym">ctc</name>
    <name type="ordered locus">Dhaf_0750</name>
</gene>
<sequence length="179" mass="19429">MSETAIQAVERKEKPKEVRSKGFVPGVIYGKGMDSISVKFDEKRLNKALQGRSQKAKISVQVAGETKQCFVGEIQKDITSGKTIHISMQVVEDDQVVKMKVPITFGGSEALSERKLIVLPYFSELELTGPSADIPEYVAVDVADKSLGDKITVADFMVSPSVSVLDDPEKIIAAITGAR</sequence>
<accession>B8FW28</accession>
<protein>
    <recommendedName>
        <fullName evidence="1">Large ribosomal subunit protein bL25</fullName>
    </recommendedName>
    <alternativeName>
        <fullName evidence="2">50S ribosomal protein L25</fullName>
    </alternativeName>
    <alternativeName>
        <fullName evidence="1">General stress protein CTC</fullName>
    </alternativeName>
</protein>
<dbReference type="EMBL" id="CP001336">
    <property type="protein sequence ID" value="ACL18814.1"/>
    <property type="molecule type" value="Genomic_DNA"/>
</dbReference>
<dbReference type="RefSeq" id="WP_005808697.1">
    <property type="nucleotide sequence ID" value="NC_011830.1"/>
</dbReference>
<dbReference type="SMR" id="B8FW28"/>
<dbReference type="KEGG" id="dhd:Dhaf_0750"/>
<dbReference type="HOGENOM" id="CLU_075939_2_2_9"/>
<dbReference type="Proteomes" id="UP000007726">
    <property type="component" value="Chromosome"/>
</dbReference>
<dbReference type="GO" id="GO:0022625">
    <property type="term" value="C:cytosolic large ribosomal subunit"/>
    <property type="evidence" value="ECO:0007669"/>
    <property type="project" value="TreeGrafter"/>
</dbReference>
<dbReference type="GO" id="GO:0008097">
    <property type="term" value="F:5S rRNA binding"/>
    <property type="evidence" value="ECO:0007669"/>
    <property type="project" value="InterPro"/>
</dbReference>
<dbReference type="GO" id="GO:0003735">
    <property type="term" value="F:structural constituent of ribosome"/>
    <property type="evidence" value="ECO:0007669"/>
    <property type="project" value="InterPro"/>
</dbReference>
<dbReference type="GO" id="GO:0006412">
    <property type="term" value="P:translation"/>
    <property type="evidence" value="ECO:0007669"/>
    <property type="project" value="UniProtKB-UniRule"/>
</dbReference>
<dbReference type="CDD" id="cd00495">
    <property type="entry name" value="Ribosomal_L25_TL5_CTC"/>
    <property type="match status" value="1"/>
</dbReference>
<dbReference type="Gene3D" id="2.170.120.20">
    <property type="entry name" value="Ribosomal protein L25, beta domain"/>
    <property type="match status" value="1"/>
</dbReference>
<dbReference type="Gene3D" id="2.40.240.10">
    <property type="entry name" value="Ribosomal Protein L25, Chain P"/>
    <property type="match status" value="1"/>
</dbReference>
<dbReference type="HAMAP" id="MF_01334">
    <property type="entry name" value="Ribosomal_bL25_CTC"/>
    <property type="match status" value="1"/>
</dbReference>
<dbReference type="InterPro" id="IPR020056">
    <property type="entry name" value="Rbsml_bL25/Gln-tRNA_synth_N"/>
</dbReference>
<dbReference type="InterPro" id="IPR011035">
    <property type="entry name" value="Ribosomal_bL25/Gln-tRNA_synth"/>
</dbReference>
<dbReference type="InterPro" id="IPR020057">
    <property type="entry name" value="Ribosomal_bL25_b-dom"/>
</dbReference>
<dbReference type="InterPro" id="IPR037121">
    <property type="entry name" value="Ribosomal_bL25_C"/>
</dbReference>
<dbReference type="InterPro" id="IPR001021">
    <property type="entry name" value="Ribosomal_bL25_long"/>
</dbReference>
<dbReference type="InterPro" id="IPR029751">
    <property type="entry name" value="Ribosomal_L25_dom"/>
</dbReference>
<dbReference type="InterPro" id="IPR020930">
    <property type="entry name" value="Ribosomal_uL5_bac-type"/>
</dbReference>
<dbReference type="NCBIfam" id="TIGR00731">
    <property type="entry name" value="bL25_bact_ctc"/>
    <property type="match status" value="1"/>
</dbReference>
<dbReference type="PANTHER" id="PTHR33284">
    <property type="entry name" value="RIBOSOMAL PROTEIN L25/GLN-TRNA SYNTHETASE, ANTI-CODON-BINDING DOMAIN-CONTAINING PROTEIN"/>
    <property type="match status" value="1"/>
</dbReference>
<dbReference type="PANTHER" id="PTHR33284:SF1">
    <property type="entry name" value="RIBOSOMAL PROTEIN L25_GLN-TRNA SYNTHETASE, ANTI-CODON-BINDING DOMAIN-CONTAINING PROTEIN"/>
    <property type="match status" value="1"/>
</dbReference>
<dbReference type="Pfam" id="PF01386">
    <property type="entry name" value="Ribosomal_L25p"/>
    <property type="match status" value="1"/>
</dbReference>
<dbReference type="Pfam" id="PF14693">
    <property type="entry name" value="Ribosomal_TL5_C"/>
    <property type="match status" value="1"/>
</dbReference>
<dbReference type="SUPFAM" id="SSF50715">
    <property type="entry name" value="Ribosomal protein L25-like"/>
    <property type="match status" value="1"/>
</dbReference>
<reference key="1">
    <citation type="journal article" date="2012" name="BMC Microbiol.">
        <title>Genome sequence of Desulfitobacterium hafniense DCB-2, a Gram-positive anaerobe capable of dehalogenation and metal reduction.</title>
        <authorList>
            <person name="Kim S.H."/>
            <person name="Harzman C."/>
            <person name="Davis J.K."/>
            <person name="Hutcheson R."/>
            <person name="Broderick J.B."/>
            <person name="Marsh T.L."/>
            <person name="Tiedje J.M."/>
        </authorList>
    </citation>
    <scope>NUCLEOTIDE SEQUENCE [LARGE SCALE GENOMIC DNA]</scope>
    <source>
        <strain>DSM 10664 / DCB-2</strain>
    </source>
</reference>
<name>RL25_DESHD</name>
<keyword id="KW-0687">Ribonucleoprotein</keyword>
<keyword id="KW-0689">Ribosomal protein</keyword>
<keyword id="KW-0694">RNA-binding</keyword>
<keyword id="KW-0699">rRNA-binding</keyword>
<proteinExistence type="inferred from homology"/>
<comment type="function">
    <text evidence="1">This is one of the proteins that binds to the 5S RNA in the ribosome where it forms part of the central protuberance.</text>
</comment>
<comment type="subunit">
    <text evidence="1">Part of the 50S ribosomal subunit; part of the 5S rRNA/L5/L18/L25 subcomplex. Contacts the 5S rRNA. Binds to the 5S rRNA independently of L5 and L18.</text>
</comment>
<comment type="similarity">
    <text evidence="1">Belongs to the bacterial ribosomal protein bL25 family. CTC subfamily.</text>
</comment>
<feature type="chain" id="PRO_1000166169" description="Large ribosomal subunit protein bL25">
    <location>
        <begin position="1"/>
        <end position="179"/>
    </location>
</feature>
<organism>
    <name type="scientific">Desulfitobacterium hafniense (strain DSM 10664 / DCB-2)</name>
    <dbReference type="NCBI Taxonomy" id="272564"/>
    <lineage>
        <taxon>Bacteria</taxon>
        <taxon>Bacillati</taxon>
        <taxon>Bacillota</taxon>
        <taxon>Clostridia</taxon>
        <taxon>Eubacteriales</taxon>
        <taxon>Desulfitobacteriaceae</taxon>
        <taxon>Desulfitobacterium</taxon>
    </lineage>
</organism>